<accession>Q8UWJ4</accession>
<accession>P87357</accession>
<feature type="signal peptide" evidence="2">
    <location>
        <begin position="1"/>
        <end position="19"/>
    </location>
</feature>
<feature type="chain" id="PRO_0000007517" description="Delta-like protein D">
    <location>
        <begin position="20"/>
        <end position="717"/>
    </location>
</feature>
<feature type="topological domain" description="Extracellular" evidence="2">
    <location>
        <begin position="20"/>
        <end position="547"/>
    </location>
</feature>
<feature type="transmembrane region" description="Helical" evidence="2">
    <location>
        <begin position="548"/>
        <end position="568"/>
    </location>
</feature>
<feature type="topological domain" description="Cytoplasmic" evidence="2">
    <location>
        <begin position="569"/>
        <end position="717"/>
    </location>
</feature>
<feature type="domain" description="DSL" evidence="4">
    <location>
        <begin position="175"/>
        <end position="219"/>
    </location>
</feature>
<feature type="domain" description="EGF-like 1" evidence="3">
    <location>
        <begin position="220"/>
        <end position="253"/>
    </location>
</feature>
<feature type="domain" description="EGF-like 2" evidence="3">
    <location>
        <begin position="257"/>
        <end position="284"/>
    </location>
</feature>
<feature type="domain" description="EGF-like 3" evidence="3">
    <location>
        <begin position="286"/>
        <end position="324"/>
    </location>
</feature>
<feature type="domain" description="EGF-like 4; calcium-binding" evidence="3">
    <location>
        <begin position="326"/>
        <end position="362"/>
    </location>
</feature>
<feature type="domain" description="EGF-like 5" evidence="3">
    <location>
        <begin position="364"/>
        <end position="401"/>
    </location>
</feature>
<feature type="domain" description="EGF-like 6" evidence="3">
    <location>
        <begin position="403"/>
        <end position="439"/>
    </location>
</feature>
<feature type="domain" description="EGF-like 7; calcium-binding" evidence="3">
    <location>
        <begin position="441"/>
        <end position="477"/>
    </location>
</feature>
<feature type="domain" description="EGF-like 8" evidence="3">
    <location>
        <begin position="479"/>
        <end position="515"/>
    </location>
</feature>
<feature type="region of interest" description="Disordered" evidence="5">
    <location>
        <begin position="649"/>
        <end position="693"/>
    </location>
</feature>
<feature type="glycosylation site" description="N-linked (GlcNAc...) asparagine" evidence="2">
    <location>
        <position position="475"/>
    </location>
</feature>
<feature type="disulfide bond" evidence="1">
    <location>
        <begin position="177"/>
        <end position="186"/>
    </location>
</feature>
<feature type="disulfide bond" evidence="1">
    <location>
        <begin position="190"/>
        <end position="202"/>
    </location>
</feature>
<feature type="disulfide bond" evidence="1">
    <location>
        <begin position="210"/>
        <end position="219"/>
    </location>
</feature>
<feature type="disulfide bond" evidence="1">
    <location>
        <begin position="224"/>
        <end position="235"/>
    </location>
</feature>
<feature type="disulfide bond" evidence="1">
    <location>
        <begin position="228"/>
        <end position="241"/>
    </location>
</feature>
<feature type="disulfide bond" evidence="1">
    <location>
        <begin position="243"/>
        <end position="252"/>
    </location>
</feature>
<feature type="disulfide bond" evidence="1">
    <location>
        <begin position="261"/>
        <end position="266"/>
    </location>
</feature>
<feature type="disulfide bond" evidence="1">
    <location>
        <begin position="274"/>
        <end position="283"/>
    </location>
</feature>
<feature type="disulfide bond" evidence="1">
    <location>
        <begin position="290"/>
        <end position="302"/>
    </location>
</feature>
<feature type="disulfide bond" evidence="1">
    <location>
        <begin position="296"/>
        <end position="312"/>
    </location>
</feature>
<feature type="disulfide bond" evidence="1">
    <location>
        <begin position="314"/>
        <end position="323"/>
    </location>
</feature>
<feature type="disulfide bond" evidence="1">
    <location>
        <begin position="330"/>
        <end position="341"/>
    </location>
</feature>
<feature type="disulfide bond" evidence="1">
    <location>
        <begin position="335"/>
        <end position="350"/>
    </location>
</feature>
<feature type="disulfide bond" evidence="1">
    <location>
        <begin position="352"/>
        <end position="361"/>
    </location>
</feature>
<feature type="disulfide bond" evidence="1">
    <location>
        <begin position="368"/>
        <end position="379"/>
    </location>
</feature>
<feature type="disulfide bond" evidence="1">
    <location>
        <begin position="373"/>
        <end position="389"/>
    </location>
</feature>
<feature type="disulfide bond" evidence="1">
    <location>
        <begin position="391"/>
        <end position="400"/>
    </location>
</feature>
<feature type="disulfide bond" evidence="1">
    <location>
        <begin position="407"/>
        <end position="418"/>
    </location>
</feature>
<feature type="disulfide bond" evidence="1">
    <location>
        <begin position="412"/>
        <end position="427"/>
    </location>
</feature>
<feature type="disulfide bond" evidence="1">
    <location>
        <begin position="429"/>
        <end position="438"/>
    </location>
</feature>
<feature type="disulfide bond" evidence="1">
    <location>
        <begin position="445"/>
        <end position="456"/>
    </location>
</feature>
<feature type="disulfide bond" evidence="1">
    <location>
        <begin position="450"/>
        <end position="465"/>
    </location>
</feature>
<feature type="disulfide bond" evidence="1">
    <location>
        <begin position="467"/>
        <end position="476"/>
    </location>
</feature>
<feature type="disulfide bond" evidence="1">
    <location>
        <begin position="483"/>
        <end position="494"/>
    </location>
</feature>
<feature type="disulfide bond" evidence="1">
    <location>
        <begin position="488"/>
        <end position="503"/>
    </location>
</feature>
<feature type="disulfide bond" evidence="1">
    <location>
        <begin position="505"/>
        <end position="514"/>
    </location>
</feature>
<feature type="sequence conflict" description="In Ref. 2; AAL31528." evidence="13" ref="2">
    <original>E</original>
    <variation>D</variation>
    <location>
        <position position="95"/>
    </location>
</feature>
<feature type="sequence conflict" description="In Ref. 2; AAL31528." evidence="13" ref="2">
    <original>V</original>
    <variation>ISEC</variation>
    <location>
        <position position="717"/>
    </location>
</feature>
<proteinExistence type="evidence at protein level"/>
<evidence type="ECO:0000250" key="1"/>
<evidence type="ECO:0000255" key="2"/>
<evidence type="ECO:0000255" key="3">
    <source>
        <dbReference type="PROSITE-ProRule" id="PRU00076"/>
    </source>
</evidence>
<evidence type="ECO:0000255" key="4">
    <source>
        <dbReference type="PROSITE-ProRule" id="PRU00377"/>
    </source>
</evidence>
<evidence type="ECO:0000256" key="5">
    <source>
        <dbReference type="SAM" id="MobiDB-lite"/>
    </source>
</evidence>
<evidence type="ECO:0000269" key="6">
    <source>
    </source>
</evidence>
<evidence type="ECO:0000269" key="7">
    <source>
    </source>
</evidence>
<evidence type="ECO:0000269" key="8">
    <source>
    </source>
</evidence>
<evidence type="ECO:0000269" key="9">
    <source>
    </source>
</evidence>
<evidence type="ECO:0000269" key="10">
    <source>
    </source>
</evidence>
<evidence type="ECO:0000269" key="11">
    <source>
    </source>
</evidence>
<evidence type="ECO:0000269" key="12">
    <source>
    </source>
</evidence>
<evidence type="ECO:0000305" key="13"/>
<keyword id="KW-0106">Calcium</keyword>
<keyword id="KW-0217">Developmental protein</keyword>
<keyword id="KW-0221">Differentiation</keyword>
<keyword id="KW-1015">Disulfide bond</keyword>
<keyword id="KW-0245">EGF-like domain</keyword>
<keyword id="KW-0325">Glycoprotein</keyword>
<keyword id="KW-0472">Membrane</keyword>
<keyword id="KW-0524">Neurogenesis</keyword>
<keyword id="KW-0914">Notch signaling pathway</keyword>
<keyword id="KW-1185">Reference proteome</keyword>
<keyword id="KW-0677">Repeat</keyword>
<keyword id="KW-0732">Signal</keyword>
<keyword id="KW-0812">Transmembrane</keyword>
<keyword id="KW-1133">Transmembrane helix</keyword>
<keyword id="KW-0832">Ubl conjugation</keyword>
<sequence length="717" mass="79061">MGRLMIAVLLCVMISQGFCSGVFELKLQEFLNKKGVTGNANCCKGSAAEGHQCECKTFFRICLKHYQANVSPDPPCTYGGAVTPVLGSNSFQVPESFPDSSFTNPIPFAFGFTWPGTFSLIIEALHTDSTDDLSTENPDRLISRMTTQRHLTVGEEWSQDLQVGGRTELKYSYRFVCDEHYYGEGCSVFCRPRDDTFGHFTCGERGEIICNSGWKGQYCTEPICLPGCDEDHGFCDKPGECKCRVGFSGKYCDDCIRYPGCLHGTCQQPWQCNCQEGWGGLFCNQDLNYCTHHKPCQNGATCTNTGQGSYTCSCRPGFTGDSCEIEVNECSGSPCRNGGSCTDLENTYSCTCPPGFYGRNCELSAMTCADGPCFNGGHCADNPEGGYFCQCPMGYAGFNCEKKIDHCSSNPCSNDAQCLDLVDSYLCQCPEGFTGTHCEDNIDECATYPCQNGGTCQDGLSDYTCTCPPGYTGKNCTSAVNKCLHNPCHNGATCHEMDNRYVCACIPGYGGRNCQFLLPENPQGQAIVEGADKRYSYEEDDGGFPWTAVCAGIILVLLVLIGGSVFVIYIRLKLQQRSQQIDSHSEIETMNNLTNNRSREKDLSVSIIGATQVKNINKKVDFQSDGDKNGFKSRYSLVDYNLVHELKQEDLGKEDSERSEATKCEPLDSDSEEKHRNHLKSDSSERKRTESLCKDTKYQSVFVLSEEKDECIIATEV</sequence>
<name>DLLD_DANRE</name>
<protein>
    <recommendedName>
        <fullName>Delta-like protein D</fullName>
        <shortName>DeltaD</shortName>
    </recommendedName>
    <alternativeName>
        <fullName>After eight protein</fullName>
    </alternativeName>
</protein>
<dbReference type="EMBL" id="Y11760">
    <property type="protein sequence ID" value="CAA72425.1"/>
    <property type="molecule type" value="mRNA"/>
</dbReference>
<dbReference type="EMBL" id="AF426384">
    <property type="protein sequence ID" value="AAL31528.1"/>
    <property type="molecule type" value="Genomic_DNA"/>
</dbReference>
<dbReference type="SMR" id="Q8UWJ4"/>
<dbReference type="FunCoup" id="Q8UWJ4">
    <property type="interactions" value="845"/>
</dbReference>
<dbReference type="STRING" id="7955.ENSDARP00000089996"/>
<dbReference type="GlyCosmos" id="Q8UWJ4">
    <property type="glycosylation" value="1 site, No reported glycans"/>
</dbReference>
<dbReference type="PaxDb" id="7955-ENSDARP00000089996"/>
<dbReference type="AGR" id="ZFIN:ZDB-GENE-990415-47"/>
<dbReference type="ZFIN" id="ZDB-GENE-990415-47">
    <property type="gene designation" value="dld"/>
</dbReference>
<dbReference type="eggNOG" id="KOG1217">
    <property type="taxonomic scope" value="Eukaryota"/>
</dbReference>
<dbReference type="InParanoid" id="Q8UWJ4"/>
<dbReference type="PhylomeDB" id="Q8UWJ4"/>
<dbReference type="SignaLink" id="Q8UWJ4"/>
<dbReference type="PRO" id="PR:Q8UWJ4"/>
<dbReference type="Proteomes" id="UP000000437">
    <property type="component" value="Unplaced"/>
</dbReference>
<dbReference type="GO" id="GO:0005737">
    <property type="term" value="C:cytoplasm"/>
    <property type="evidence" value="ECO:0000314"/>
    <property type="project" value="ZFIN"/>
</dbReference>
<dbReference type="GO" id="GO:0016020">
    <property type="term" value="C:membrane"/>
    <property type="evidence" value="ECO:0000314"/>
    <property type="project" value="ZFIN"/>
</dbReference>
<dbReference type="GO" id="GO:0048471">
    <property type="term" value="C:perinuclear region of cytoplasm"/>
    <property type="evidence" value="ECO:0000316"/>
    <property type="project" value="ZFIN"/>
</dbReference>
<dbReference type="GO" id="GO:0005886">
    <property type="term" value="C:plasma membrane"/>
    <property type="evidence" value="ECO:0000314"/>
    <property type="project" value="ZFIN"/>
</dbReference>
<dbReference type="GO" id="GO:0005509">
    <property type="term" value="F:calcium ion binding"/>
    <property type="evidence" value="ECO:0007669"/>
    <property type="project" value="InterPro"/>
</dbReference>
<dbReference type="GO" id="GO:0005112">
    <property type="term" value="F:Notch binding"/>
    <property type="evidence" value="ECO:0000318"/>
    <property type="project" value="GO_Central"/>
</dbReference>
<dbReference type="GO" id="GO:0030165">
    <property type="term" value="F:PDZ domain binding"/>
    <property type="evidence" value="ECO:0000314"/>
    <property type="project" value="ZFIN"/>
</dbReference>
<dbReference type="GO" id="GO:0009952">
    <property type="term" value="P:anterior/posterior pattern specification"/>
    <property type="evidence" value="ECO:0000315"/>
    <property type="project" value="ZFIN"/>
</dbReference>
<dbReference type="GO" id="GO:0060271">
    <property type="term" value="P:cilium assembly"/>
    <property type="evidence" value="ECO:0000315"/>
    <property type="project" value="ZFIN"/>
</dbReference>
<dbReference type="GO" id="GO:0003140">
    <property type="term" value="P:determination of left/right asymmetry in lateral mesoderm"/>
    <property type="evidence" value="ECO:0000316"/>
    <property type="project" value="ZFIN"/>
</dbReference>
<dbReference type="GO" id="GO:0007368">
    <property type="term" value="P:determination of left/right symmetry"/>
    <property type="evidence" value="ECO:0000315"/>
    <property type="project" value="ZFIN"/>
</dbReference>
<dbReference type="GO" id="GO:0071910">
    <property type="term" value="P:determination of liver left/right asymmetry"/>
    <property type="evidence" value="ECO:0000315"/>
    <property type="project" value="ZFIN"/>
</dbReference>
<dbReference type="GO" id="GO:0035469">
    <property type="term" value="P:determination of pancreatic left/right asymmetry"/>
    <property type="evidence" value="ECO:0000315"/>
    <property type="project" value="ZFIN"/>
</dbReference>
<dbReference type="GO" id="GO:0048546">
    <property type="term" value="P:digestive tract morphogenesis"/>
    <property type="evidence" value="ECO:0000315"/>
    <property type="project" value="ZFIN"/>
</dbReference>
<dbReference type="GO" id="GO:0002244">
    <property type="term" value="P:hematopoietic progenitor cell differentiation"/>
    <property type="evidence" value="ECO:0000316"/>
    <property type="project" value="ZFIN"/>
</dbReference>
<dbReference type="GO" id="GO:0060218">
    <property type="term" value="P:hematopoietic stem cell differentiation"/>
    <property type="evidence" value="ECO:0000315"/>
    <property type="project" value="ZFIN"/>
</dbReference>
<dbReference type="GO" id="GO:0046331">
    <property type="term" value="P:lateral inhibition"/>
    <property type="evidence" value="ECO:0000315"/>
    <property type="project" value="ZFIN"/>
</dbReference>
<dbReference type="GO" id="GO:0045746">
    <property type="term" value="P:negative regulation of Notch signaling pathway"/>
    <property type="evidence" value="ECO:0000318"/>
    <property type="project" value="GO_Central"/>
</dbReference>
<dbReference type="GO" id="GO:0007219">
    <property type="term" value="P:Notch signaling pathway"/>
    <property type="evidence" value="ECO:0000315"/>
    <property type="project" value="ZFIN"/>
</dbReference>
<dbReference type="GO" id="GO:1902036">
    <property type="term" value="P:regulation of hematopoietic stem cell differentiation"/>
    <property type="evidence" value="ECO:0000315"/>
    <property type="project" value="ZFIN"/>
</dbReference>
<dbReference type="GO" id="GO:0061056">
    <property type="term" value="P:sclerotome development"/>
    <property type="evidence" value="ECO:0000316"/>
    <property type="project" value="ZFIN"/>
</dbReference>
<dbReference type="GO" id="GO:0021523">
    <property type="term" value="P:somatic motor neuron differentiation"/>
    <property type="evidence" value="ECO:0000315"/>
    <property type="project" value="ZFIN"/>
</dbReference>
<dbReference type="GO" id="GO:0001756">
    <property type="term" value="P:somitogenesis"/>
    <property type="evidence" value="ECO:0000315"/>
    <property type="project" value="ZFIN"/>
</dbReference>
<dbReference type="GO" id="GO:0021514">
    <property type="term" value="P:ventral spinal cord interneuron differentiation"/>
    <property type="evidence" value="ECO:0000315"/>
    <property type="project" value="ZFIN"/>
</dbReference>
<dbReference type="CDD" id="cd00054">
    <property type="entry name" value="EGF_CA"/>
    <property type="match status" value="6"/>
</dbReference>
<dbReference type="FunFam" id="2.10.25.10:FF:000018">
    <property type="entry name" value="Delta-like 1"/>
    <property type="match status" value="1"/>
</dbReference>
<dbReference type="FunFam" id="2.10.25.10:FF:000012">
    <property type="entry name" value="Delta-like protein"/>
    <property type="match status" value="3"/>
</dbReference>
<dbReference type="FunFam" id="2.10.25.10:FF:000064">
    <property type="entry name" value="Delta-like protein"/>
    <property type="match status" value="1"/>
</dbReference>
<dbReference type="FunFam" id="2.10.25.140:FF:000001">
    <property type="entry name" value="Delta-like protein"/>
    <property type="match status" value="1"/>
</dbReference>
<dbReference type="FunFam" id="2.60.40.3510:FF:000002">
    <property type="entry name" value="Delta-like protein"/>
    <property type="match status" value="1"/>
</dbReference>
<dbReference type="FunFam" id="2.10.25.10:FF:000004">
    <property type="entry name" value="Neurogenic locus notch 1"/>
    <property type="match status" value="1"/>
</dbReference>
<dbReference type="FunFam" id="2.10.25.10:FF:000434">
    <property type="entry name" value="Predicted protein"/>
    <property type="match status" value="1"/>
</dbReference>
<dbReference type="Gene3D" id="2.10.25.140">
    <property type="match status" value="1"/>
</dbReference>
<dbReference type="Gene3D" id="2.60.40.3510">
    <property type="match status" value="1"/>
</dbReference>
<dbReference type="Gene3D" id="2.10.25.10">
    <property type="entry name" value="Laminin"/>
    <property type="match status" value="7"/>
</dbReference>
<dbReference type="InterPro" id="IPR001774">
    <property type="entry name" value="DSL"/>
</dbReference>
<dbReference type="InterPro" id="IPR001881">
    <property type="entry name" value="EGF-like_Ca-bd_dom"/>
</dbReference>
<dbReference type="InterPro" id="IPR013032">
    <property type="entry name" value="EGF-like_CS"/>
</dbReference>
<dbReference type="InterPro" id="IPR000742">
    <property type="entry name" value="EGF-like_dom"/>
</dbReference>
<dbReference type="InterPro" id="IPR000152">
    <property type="entry name" value="EGF-type_Asp/Asn_hydroxyl_site"/>
</dbReference>
<dbReference type="InterPro" id="IPR018097">
    <property type="entry name" value="EGF_Ca-bd_CS"/>
</dbReference>
<dbReference type="InterPro" id="IPR009030">
    <property type="entry name" value="Growth_fac_rcpt_cys_sf"/>
</dbReference>
<dbReference type="InterPro" id="IPR011651">
    <property type="entry name" value="Notch_ligand_N"/>
</dbReference>
<dbReference type="PANTHER" id="PTHR12916">
    <property type="entry name" value="CYTOCHROME C OXIDASE POLYPEPTIDE VIC-2"/>
    <property type="match status" value="1"/>
</dbReference>
<dbReference type="PANTHER" id="PTHR12916:SF4">
    <property type="entry name" value="UNINFLATABLE, ISOFORM C"/>
    <property type="match status" value="1"/>
</dbReference>
<dbReference type="Pfam" id="PF01414">
    <property type="entry name" value="DSL"/>
    <property type="match status" value="1"/>
</dbReference>
<dbReference type="Pfam" id="PF00008">
    <property type="entry name" value="EGF"/>
    <property type="match status" value="5"/>
</dbReference>
<dbReference type="Pfam" id="PF21700">
    <property type="entry name" value="EGF_DL_JAG"/>
    <property type="match status" value="1"/>
</dbReference>
<dbReference type="Pfam" id="PF12661">
    <property type="entry name" value="hEGF"/>
    <property type="match status" value="1"/>
</dbReference>
<dbReference type="Pfam" id="PF07657">
    <property type="entry name" value="MNNL"/>
    <property type="match status" value="1"/>
</dbReference>
<dbReference type="PRINTS" id="PR00010">
    <property type="entry name" value="EGFBLOOD"/>
</dbReference>
<dbReference type="SMART" id="SM00051">
    <property type="entry name" value="DSL"/>
    <property type="match status" value="1"/>
</dbReference>
<dbReference type="SMART" id="SM00181">
    <property type="entry name" value="EGF"/>
    <property type="match status" value="8"/>
</dbReference>
<dbReference type="SMART" id="SM00179">
    <property type="entry name" value="EGF_CA"/>
    <property type="match status" value="6"/>
</dbReference>
<dbReference type="SUPFAM" id="SSF57196">
    <property type="entry name" value="EGF/Laminin"/>
    <property type="match status" value="3"/>
</dbReference>
<dbReference type="SUPFAM" id="SSF57184">
    <property type="entry name" value="Growth factor receptor domain"/>
    <property type="match status" value="1"/>
</dbReference>
<dbReference type="PROSITE" id="PS00010">
    <property type="entry name" value="ASX_HYDROXYL"/>
    <property type="match status" value="3"/>
</dbReference>
<dbReference type="PROSITE" id="PS51051">
    <property type="entry name" value="DSL"/>
    <property type="match status" value="1"/>
</dbReference>
<dbReference type="PROSITE" id="PS00022">
    <property type="entry name" value="EGF_1"/>
    <property type="match status" value="8"/>
</dbReference>
<dbReference type="PROSITE" id="PS01186">
    <property type="entry name" value="EGF_2"/>
    <property type="match status" value="8"/>
</dbReference>
<dbReference type="PROSITE" id="PS50026">
    <property type="entry name" value="EGF_3"/>
    <property type="match status" value="8"/>
</dbReference>
<dbReference type="PROSITE" id="PS01187">
    <property type="entry name" value="EGF_CA"/>
    <property type="match status" value="2"/>
</dbReference>
<gene>
    <name type="primary">dld</name>
    <name type="synonym">aei</name>
</gene>
<reference key="1">
    <citation type="journal article" date="1997" name="Mech. Dev.">
        <title>Overexpression of a zebrafish homologue of the Drosophila neurogenic gene delta perturbs differentiation of primary neurons and somitic development.</title>
        <authorList>
            <person name="Dornseifer P."/>
            <person name="Takke C."/>
            <person name="Campos-Ortega J.A."/>
        </authorList>
    </citation>
    <scope>NUCLEOTIDE SEQUENCE [MRNA]</scope>
    <scope>TISSUE SPECIFICITY</scope>
</reference>
<reference key="2">
    <citation type="journal article" date="2002" name="Development">
        <title>On the organisation of the regulatory region of the zebrafish deltaD gene.</title>
        <authorList>
            <person name="Hans S."/>
            <person name="Campos-Ortega J.A."/>
        </authorList>
    </citation>
    <scope>NUCLEOTIDE SEQUENCE [GENOMIC DNA]</scope>
    <scope>TISSUE SPECIFICITY</scope>
</reference>
<reference key="3">
    <citation type="journal article" date="1998" name="Development">
        <title>Multiple delta genes and lateral inhibition in zebrafish primary neurogenesis.</title>
        <authorList>
            <person name="Haddon C."/>
            <person name="Smithers L."/>
            <person name="Schneider-Maunoury S."/>
            <person name="Coche T."/>
            <person name="Henrique D."/>
            <person name="Lewis J."/>
        </authorList>
    </citation>
    <scope>TISSUE SPECIFICITY</scope>
</reference>
<reference key="4">
    <citation type="journal article" date="2000" name="Nature">
        <title>Notch signalling and the synchronization of the somite segmentation clock.</title>
        <authorList>
            <person name="Jiang Y.-J."/>
            <person name="Aerne B.L."/>
            <person name="Smithers L."/>
            <person name="Haddon C."/>
            <person name="Ish-Horowicz D."/>
            <person name="Lewis J."/>
        </authorList>
    </citation>
    <scope>FUNCTION</scope>
</reference>
<reference key="5">
    <citation type="journal article" date="2004" name="Dev. Biol.">
        <title>Three modules of zebrafish Mind bomb work cooperatively to promote Delta ubiquitination and endocytosis.</title>
        <authorList>
            <person name="Chen W."/>
            <person name="Corliss D.C."/>
        </authorList>
    </citation>
    <scope>INTERACTION WITH MIB</scope>
</reference>
<reference key="6">
    <citation type="journal article" date="2003" name="Dev. Cell">
        <title>Mind bomb is a ubiquitin ligase that is essential for efficient activation of Notch signaling by Delta.</title>
        <authorList>
            <person name="Itoh M."/>
            <person name="Kim C.-H."/>
            <person name="Palardy G."/>
            <person name="Oda T."/>
            <person name="Jiang Y.-J."/>
            <person name="Maust D."/>
            <person name="Yeo S.-Y."/>
            <person name="Lorick K."/>
            <person name="Wright G.J."/>
            <person name="Ariza-McNaughton L."/>
            <person name="Weissman A.M."/>
            <person name="Lewis J."/>
            <person name="Chandrasekharappa S.C."/>
            <person name="Chitnis A.B."/>
        </authorList>
    </citation>
    <scope>UBIQUITINATION</scope>
</reference>
<reference key="7">
    <citation type="journal article" date="2004" name="Dev. Cell">
        <title>Notch activation regulates the segregation and differentiation of rhombomere boundary cells in the zebrafish hindbrain.</title>
        <authorList>
            <person name="Cheng Y.-C."/>
            <person name="Amoyel M."/>
            <person name="Qiu X."/>
            <person name="Jiang Y.-J."/>
            <person name="Xu Q."/>
            <person name="Wilkinson D.G."/>
        </authorList>
    </citation>
    <scope>TISSUE SPECIFICITY</scope>
</reference>
<comment type="function">
    <text evidence="6">Acts as a ligand for Notch receptors and is involved in primary neurogenesis and somitogenesis. Can activate Notch receptors, thereby playing a key role in lateral inhibition, a process that prevents the immediate neighbors of each nascent neural cell from simultaneously embarking on neural differentiation. Required in somite segmentation to keep the oscillations of neighboring presomitic mesoderm cells synchronized.</text>
</comment>
<comment type="subunit">
    <text evidence="9">Interacts with mib.</text>
</comment>
<comment type="subcellular location">
    <subcellularLocation>
        <location evidence="1">Membrane</location>
        <topology evidence="1">Single-pass type I membrane protein</topology>
    </subcellularLocation>
</comment>
<comment type="tissue specificity">
    <text evidence="7 10 11 12">Expressed in both mesodermal and neuroectodermal regions. In the developing nervous system, it is expressed in overlapping regions with deltaB (dlb) and deltaA (dla); in the neural plate, dld is expressed in patches of contiguous cells with dla, while dlb is confined to scattered cells within those patches that will differentiate as neurons. In somites, it marks the anterior part of each formed somite, while deltaC (dlc) marks the posterior part. In 24 hours embryos, expressed in the hindbrain in stripes adjacent to rhombomere boundaries, but not in the actual boundary cells.</text>
</comment>
<comment type="PTM">
    <text evidence="8">Ubiquitinated by mib, leading to its endocytosis and subsequent degradation.</text>
</comment>
<organism>
    <name type="scientific">Danio rerio</name>
    <name type="common">Zebrafish</name>
    <name type="synonym">Brachydanio rerio</name>
    <dbReference type="NCBI Taxonomy" id="7955"/>
    <lineage>
        <taxon>Eukaryota</taxon>
        <taxon>Metazoa</taxon>
        <taxon>Chordata</taxon>
        <taxon>Craniata</taxon>
        <taxon>Vertebrata</taxon>
        <taxon>Euteleostomi</taxon>
        <taxon>Actinopterygii</taxon>
        <taxon>Neopterygii</taxon>
        <taxon>Teleostei</taxon>
        <taxon>Ostariophysi</taxon>
        <taxon>Cypriniformes</taxon>
        <taxon>Danionidae</taxon>
        <taxon>Danioninae</taxon>
        <taxon>Danio</taxon>
    </lineage>
</organism>